<dbReference type="EC" id="1.4.99.-" evidence="1"/>
<dbReference type="EMBL" id="AM747720">
    <property type="protein sequence ID" value="CAR53233.1"/>
    <property type="molecule type" value="Genomic_DNA"/>
</dbReference>
<dbReference type="RefSeq" id="WP_006486941.1">
    <property type="nucleotide sequence ID" value="NC_011000.1"/>
</dbReference>
<dbReference type="SMR" id="B4EAP1"/>
<dbReference type="KEGG" id="bcj:BCAL2933"/>
<dbReference type="eggNOG" id="COG0665">
    <property type="taxonomic scope" value="Bacteria"/>
</dbReference>
<dbReference type="HOGENOM" id="CLU_007884_9_2_4"/>
<dbReference type="BioCyc" id="BCEN216591:G1G1V-3242-MONOMER"/>
<dbReference type="UniPathway" id="UPA00043">
    <property type="reaction ID" value="UER00498"/>
</dbReference>
<dbReference type="Proteomes" id="UP000001035">
    <property type="component" value="Chromosome 1"/>
</dbReference>
<dbReference type="GO" id="GO:0005737">
    <property type="term" value="C:cytoplasm"/>
    <property type="evidence" value="ECO:0007669"/>
    <property type="project" value="TreeGrafter"/>
</dbReference>
<dbReference type="GO" id="GO:0005886">
    <property type="term" value="C:plasma membrane"/>
    <property type="evidence" value="ECO:0007669"/>
    <property type="project" value="TreeGrafter"/>
</dbReference>
<dbReference type="GO" id="GO:0008718">
    <property type="term" value="F:D-amino-acid dehydrogenase activity"/>
    <property type="evidence" value="ECO:0007669"/>
    <property type="project" value="UniProtKB-UniRule"/>
</dbReference>
<dbReference type="GO" id="GO:0055130">
    <property type="term" value="P:D-alanine catabolic process"/>
    <property type="evidence" value="ECO:0007669"/>
    <property type="project" value="UniProtKB-UniPathway"/>
</dbReference>
<dbReference type="FunFam" id="3.50.50.60:FF:000020">
    <property type="entry name" value="D-amino acid dehydrogenase"/>
    <property type="match status" value="1"/>
</dbReference>
<dbReference type="Gene3D" id="3.30.9.10">
    <property type="entry name" value="D-Amino Acid Oxidase, subunit A, domain 2"/>
    <property type="match status" value="1"/>
</dbReference>
<dbReference type="Gene3D" id="3.50.50.60">
    <property type="entry name" value="FAD/NAD(P)-binding domain"/>
    <property type="match status" value="2"/>
</dbReference>
<dbReference type="HAMAP" id="MF_01202">
    <property type="entry name" value="DadA"/>
    <property type="match status" value="1"/>
</dbReference>
<dbReference type="InterPro" id="IPR023080">
    <property type="entry name" value="DadA"/>
</dbReference>
<dbReference type="InterPro" id="IPR006076">
    <property type="entry name" value="FAD-dep_OxRdtase"/>
</dbReference>
<dbReference type="InterPro" id="IPR036188">
    <property type="entry name" value="FAD/NAD-bd_sf"/>
</dbReference>
<dbReference type="NCBIfam" id="NF001933">
    <property type="entry name" value="PRK00711.1"/>
    <property type="match status" value="1"/>
</dbReference>
<dbReference type="PANTHER" id="PTHR13847:SF280">
    <property type="entry name" value="D-AMINO ACID DEHYDROGENASE"/>
    <property type="match status" value="1"/>
</dbReference>
<dbReference type="PANTHER" id="PTHR13847">
    <property type="entry name" value="SARCOSINE DEHYDROGENASE-RELATED"/>
    <property type="match status" value="1"/>
</dbReference>
<dbReference type="Pfam" id="PF01266">
    <property type="entry name" value="DAO"/>
    <property type="match status" value="1"/>
</dbReference>
<dbReference type="SUPFAM" id="SSF54373">
    <property type="entry name" value="FAD-linked reductases, C-terminal domain"/>
    <property type="match status" value="1"/>
</dbReference>
<dbReference type="SUPFAM" id="SSF51905">
    <property type="entry name" value="FAD/NAD(P)-binding domain"/>
    <property type="match status" value="1"/>
</dbReference>
<proteinExistence type="inferred from homology"/>
<protein>
    <recommendedName>
        <fullName evidence="1">D-amino acid dehydrogenase</fullName>
        <ecNumber evidence="1">1.4.99.-</ecNumber>
    </recommendedName>
</protein>
<reference key="1">
    <citation type="journal article" date="2009" name="J. Bacteriol.">
        <title>The genome of Burkholderia cenocepacia J2315, an epidemic pathogen of cystic fibrosis patients.</title>
        <authorList>
            <person name="Holden M.T."/>
            <person name="Seth-Smith H.M."/>
            <person name="Crossman L.C."/>
            <person name="Sebaihia M."/>
            <person name="Bentley S.D."/>
            <person name="Cerdeno-Tarraga A.M."/>
            <person name="Thomson N.R."/>
            <person name="Bason N."/>
            <person name="Quail M.A."/>
            <person name="Sharp S."/>
            <person name="Cherevach I."/>
            <person name="Churcher C."/>
            <person name="Goodhead I."/>
            <person name="Hauser H."/>
            <person name="Holroyd N."/>
            <person name="Mungall K."/>
            <person name="Scott P."/>
            <person name="Walker D."/>
            <person name="White B."/>
            <person name="Rose H."/>
            <person name="Iversen P."/>
            <person name="Mil-Homens D."/>
            <person name="Rocha E.P."/>
            <person name="Fialho A.M."/>
            <person name="Baldwin A."/>
            <person name="Dowson C."/>
            <person name="Barrell B.G."/>
            <person name="Govan J.R."/>
            <person name="Vandamme P."/>
            <person name="Hart C.A."/>
            <person name="Mahenthiralingam E."/>
            <person name="Parkhill J."/>
        </authorList>
    </citation>
    <scope>NUCLEOTIDE SEQUENCE [LARGE SCALE GENOMIC DNA]</scope>
    <source>
        <strain>ATCC BAA-245 / DSM 16553 / LMG 16656 / NCTC 13227 / J2315 / CF5610</strain>
    </source>
</reference>
<organism>
    <name type="scientific">Burkholderia cenocepacia (strain ATCC BAA-245 / DSM 16553 / LMG 16656 / NCTC 13227 / J2315 / CF5610)</name>
    <name type="common">Burkholderia cepacia (strain J2315)</name>
    <dbReference type="NCBI Taxonomy" id="216591"/>
    <lineage>
        <taxon>Bacteria</taxon>
        <taxon>Pseudomonadati</taxon>
        <taxon>Pseudomonadota</taxon>
        <taxon>Betaproteobacteria</taxon>
        <taxon>Burkholderiales</taxon>
        <taxon>Burkholderiaceae</taxon>
        <taxon>Burkholderia</taxon>
        <taxon>Burkholderia cepacia complex</taxon>
    </lineage>
</organism>
<keyword id="KW-0274">FAD</keyword>
<keyword id="KW-0285">Flavoprotein</keyword>
<keyword id="KW-0560">Oxidoreductase</keyword>
<feature type="chain" id="PRO_1000138643" description="D-amino acid dehydrogenase">
    <location>
        <begin position="1"/>
        <end position="428"/>
    </location>
</feature>
<feature type="binding site" evidence="1">
    <location>
        <begin position="3"/>
        <end position="17"/>
    </location>
    <ligand>
        <name>FAD</name>
        <dbReference type="ChEBI" id="CHEBI:57692"/>
    </ligand>
</feature>
<name>DADA_BURCJ</name>
<evidence type="ECO:0000255" key="1">
    <source>
        <dbReference type="HAMAP-Rule" id="MF_01202"/>
    </source>
</evidence>
<comment type="function">
    <text evidence="1">Oxidative deamination of D-amino acids.</text>
</comment>
<comment type="catalytic activity">
    <reaction evidence="1">
        <text>a D-alpha-amino acid + A + H2O = a 2-oxocarboxylate + AH2 + NH4(+)</text>
        <dbReference type="Rhea" id="RHEA:18125"/>
        <dbReference type="ChEBI" id="CHEBI:13193"/>
        <dbReference type="ChEBI" id="CHEBI:15377"/>
        <dbReference type="ChEBI" id="CHEBI:17499"/>
        <dbReference type="ChEBI" id="CHEBI:28938"/>
        <dbReference type="ChEBI" id="CHEBI:35179"/>
        <dbReference type="ChEBI" id="CHEBI:59871"/>
    </reaction>
</comment>
<comment type="cofactor">
    <cofactor evidence="1">
        <name>FAD</name>
        <dbReference type="ChEBI" id="CHEBI:57692"/>
    </cofactor>
</comment>
<comment type="pathway">
    <text>Amino-acid degradation; D-alanine degradation; NH(3) and pyruvate from D-alanine: step 1/1.</text>
</comment>
<comment type="similarity">
    <text evidence="1">Belongs to the DadA oxidoreductase family.</text>
</comment>
<gene>
    <name evidence="1" type="primary">dadA</name>
    <name type="ordered locus">BceJ2315_28690</name>
    <name type="ORF">BCAL2933</name>
</gene>
<sequence length="428" mass="46004">MRVVILGSGVVGVASAYYLARAGHEVTVIDREAGPALETSFANAGQISPGYAAPWAAPGVPLKAVKWMFEKHAPLAIRLDGTRFQLQWMYQMLRNCTAERYAVNKGRMVRLAEYSRDCLQALRADTGIQYEGRTGGTLQLFRTQQQLDGAAKDIAVLQEANVPFELLSPAELKKAEPALAAVSHKLTGGLRLPGDETGDCQLFTTRLAALAESLGVKFRYNTPIDALAIAGGKIAGVQCGSETVRADAYVVALGSYSTSFISNLMKVPVYPLKGYSITAPIVNEAAAPVSTVLDETYKIAITRFDQRIRVGGMAEIVGFDKKLRAARRETLEMCVNDLFPGGGDTSKATFWTGLRPMTPDGTPIVGRTPVSNLFLNTGHGTLGWTMSCGSGQLLADLISGKMPAIQADDLSVHRYLKDVPGQTRPAYA</sequence>
<accession>B4EAP1</accession>